<reference key="1">
    <citation type="journal article" date="2002" name="Proc. Natl. Acad. Sci. U.S.A.">
        <title>The genome sequence of the facultative intracellular pathogen Brucella melitensis.</title>
        <authorList>
            <person name="DelVecchio V.G."/>
            <person name="Kapatral V."/>
            <person name="Redkar R.J."/>
            <person name="Patra G."/>
            <person name="Mujer C."/>
            <person name="Los T."/>
            <person name="Ivanova N."/>
            <person name="Anderson I."/>
            <person name="Bhattacharyya A."/>
            <person name="Lykidis A."/>
            <person name="Reznik G."/>
            <person name="Jablonski L."/>
            <person name="Larsen N."/>
            <person name="D'Souza M."/>
            <person name="Bernal A."/>
            <person name="Mazur M."/>
            <person name="Goltsman E."/>
            <person name="Selkov E."/>
            <person name="Elzer P.H."/>
            <person name="Hagius S."/>
            <person name="O'Callaghan D."/>
            <person name="Letesson J.-J."/>
            <person name="Haselkorn R."/>
            <person name="Kyrpides N.C."/>
            <person name="Overbeek R."/>
        </authorList>
    </citation>
    <scope>NUCLEOTIDE SEQUENCE [LARGE SCALE GENOMIC DNA]</scope>
    <source>
        <strain>ATCC 23456 / CCUG 17765 / NCTC 10094 / 16M</strain>
    </source>
</reference>
<dbReference type="EMBL" id="AE008918">
    <property type="protein sequence ID" value="AAL53618.1"/>
    <property type="molecule type" value="Genomic_DNA"/>
</dbReference>
<dbReference type="PIR" id="AG3556">
    <property type="entry name" value="AG3556"/>
</dbReference>
<dbReference type="RefSeq" id="WP_004682315.1">
    <property type="nucleotide sequence ID" value="NZ_GG703779.1"/>
</dbReference>
<dbReference type="KEGG" id="bme:BMEII0376"/>
<dbReference type="KEGG" id="bmel:DK63_2863"/>
<dbReference type="PATRIC" id="fig|224914.52.peg.3000"/>
<dbReference type="eggNOG" id="COG3637">
    <property type="taxonomic scope" value="Bacteria"/>
</dbReference>
<dbReference type="PhylomeDB" id="Q8YD01"/>
<dbReference type="Proteomes" id="UP000000419">
    <property type="component" value="Chromosome II"/>
</dbReference>
<dbReference type="Gene3D" id="2.40.160.20">
    <property type="match status" value="1"/>
</dbReference>
<dbReference type="InterPro" id="IPR011250">
    <property type="entry name" value="OMP/PagP_b-brl"/>
</dbReference>
<dbReference type="InterPro" id="IPR027385">
    <property type="entry name" value="OMP_b-brl"/>
</dbReference>
<dbReference type="Pfam" id="PF13505">
    <property type="entry name" value="OMP_b-brl"/>
    <property type="match status" value="1"/>
</dbReference>
<dbReference type="SUPFAM" id="SSF56925">
    <property type="entry name" value="OMPA-like"/>
    <property type="match status" value="1"/>
</dbReference>
<keyword id="KW-0732">Signal</keyword>
<sequence length="284" mass="31493">MKRGCAIAVMICGLITSVSAASAADLIVQEPVFEPLPQPALAGWYLRGDIGYNFKSKTGGKWDFWNQFEEPYRGVDDTFNYDDFSLKGGASYGVGVGYRFNDMLRTDLTLDYFRASINGRTNCPSYVKSSHGLNPVEDNCHYEDNSKASVWTAMANAYVDLPRVGPLTPYLGAGIGAAYVKYDTWKTSEICPTCTLQSDKDGFDSWRFAMALMAGVSYDLTDQLKLDLGYRYLRVNGGNAYGYDEQDRQVINQYGQGAGADGPQAKDNGFNIHTVRAGLRYEFR</sequence>
<protein>
    <recommendedName>
        <fullName>Uncharacterized protein BMEII0376</fullName>
    </recommendedName>
</protein>
<comment type="similarity">
    <text evidence="2">Belongs to the surface antigen msp4 family.</text>
</comment>
<accession>Q8YD01</accession>
<evidence type="ECO:0000255" key="1"/>
<evidence type="ECO:0000305" key="2"/>
<organism>
    <name type="scientific">Brucella melitensis biotype 1 (strain ATCC 23456 / CCUG 17765 / NCTC 10094 / 16M)</name>
    <dbReference type="NCBI Taxonomy" id="224914"/>
    <lineage>
        <taxon>Bacteria</taxon>
        <taxon>Pseudomonadati</taxon>
        <taxon>Pseudomonadota</taxon>
        <taxon>Alphaproteobacteria</taxon>
        <taxon>Hyphomicrobiales</taxon>
        <taxon>Brucellaceae</taxon>
        <taxon>Brucella/Ochrobactrum group</taxon>
        <taxon>Brucella</taxon>
    </lineage>
</organism>
<gene>
    <name type="ordered locus">BMEII0376</name>
</gene>
<name>Y376_BRUME</name>
<feature type="signal peptide" evidence="1">
    <location>
        <begin position="1"/>
        <end position="23"/>
    </location>
</feature>
<feature type="chain" id="PRO_0000284477" description="Uncharacterized protein BMEII0376">
    <location>
        <begin position="24"/>
        <end position="284"/>
    </location>
</feature>
<proteinExistence type="inferred from homology"/>